<feature type="chain" id="PRO_0000077618" description="Protein ninE">
    <location>
        <begin position="1"/>
        <end position="64"/>
    </location>
</feature>
<organismHost>
    <name type="scientific">Escherichia coli O157:H7</name>
    <dbReference type="NCBI Taxonomy" id="83334"/>
</organismHost>
<sequence length="64" mass="7387">MRRQQRSITDIICENCKYLPTKRGIQKFSFEQNTMMSVQGGLSSLSDSQLTCIFKYCTLQRACV</sequence>
<accession>Q9ZWX5</accession>
<organism>
    <name type="scientific">Escherichia phage 933W</name>
    <name type="common">Bacteriophage 933W</name>
    <dbReference type="NCBI Taxonomy" id="10730"/>
    <lineage>
        <taxon>Viruses</taxon>
        <taxon>Duplodnaviria</taxon>
        <taxon>Heunggongvirae</taxon>
        <taxon>Uroviricota</taxon>
        <taxon>Caudoviricetes</taxon>
        <taxon>Sepvirinae</taxon>
        <taxon>Traversvirus</taxon>
        <taxon>Traversvirus tv933W</taxon>
    </lineage>
</organism>
<name>NINE_BP933</name>
<comment type="similarity">
    <text evidence="1">Belongs to the ninE family.</text>
</comment>
<dbReference type="EMBL" id="Y10775">
    <property type="protein sequence ID" value="CAB39293.1"/>
    <property type="molecule type" value="Genomic_DNA"/>
</dbReference>
<dbReference type="SMR" id="Q9ZWX5"/>
<dbReference type="InterPro" id="IPR007986">
    <property type="entry name" value="NINE"/>
</dbReference>
<dbReference type="Pfam" id="PF05322">
    <property type="entry name" value="NinE"/>
    <property type="match status" value="1"/>
</dbReference>
<proteinExistence type="inferred from homology"/>
<reference key="1">
    <citation type="journal article" date="1999" name="Mol. Gen. Genet.">
        <title>Shiga toxins even when different are encoded at identical positions in the genomes of related temperate bacteriophages.</title>
        <authorList>
            <person name="Karch H."/>
            <person name="Schmidt H."/>
            <person name="Janetzki-Mittmann C."/>
            <person name="Scheef J."/>
            <person name="Kroeger M."/>
        </authorList>
    </citation>
    <scope>NUCLEOTIDE SEQUENCE [GENOMIC DNA]</scope>
</reference>
<evidence type="ECO:0000305" key="1"/>
<protein>
    <recommendedName>
        <fullName>Protein ninE</fullName>
    </recommendedName>
</protein>
<gene>
    <name type="primary">ninE</name>
</gene>